<comment type="function">
    <text evidence="1">Core subunit of the mitochondrial membrane respiratory chain NADH dehydrogenase (Complex I) that is believed to belong to the minimal assembly required for catalysis. Complex I functions in the transfer of electrons from NADH to the respiratory chain. The immediate electron acceptor for the enzyme is believed to be ubiquinone (By similarity).</text>
</comment>
<comment type="catalytic activity">
    <reaction>
        <text>a ubiquinone + NADH + 5 H(+)(in) = a ubiquinol + NAD(+) + 4 H(+)(out)</text>
        <dbReference type="Rhea" id="RHEA:29091"/>
        <dbReference type="Rhea" id="RHEA-COMP:9565"/>
        <dbReference type="Rhea" id="RHEA-COMP:9566"/>
        <dbReference type="ChEBI" id="CHEBI:15378"/>
        <dbReference type="ChEBI" id="CHEBI:16389"/>
        <dbReference type="ChEBI" id="CHEBI:17976"/>
        <dbReference type="ChEBI" id="CHEBI:57540"/>
        <dbReference type="ChEBI" id="CHEBI:57945"/>
        <dbReference type="EC" id="7.1.1.2"/>
    </reaction>
</comment>
<comment type="subcellular location">
    <subcellularLocation>
        <location evidence="1">Mitochondrion membrane</location>
        <topology evidence="1">Multi-pass membrane protein</topology>
    </subcellularLocation>
</comment>
<comment type="similarity">
    <text evidence="3">Belongs to the complex I subunit 3 family.</text>
</comment>
<accession>O79553</accession>
<feature type="chain" id="PRO_0000117735" description="NADH-ubiquinone oxidoreductase chain 3">
    <location>
        <begin position="1"/>
        <end position="114"/>
    </location>
</feature>
<feature type="transmembrane region" description="Helical" evidence="2">
    <location>
        <begin position="3"/>
        <end position="23"/>
    </location>
</feature>
<feature type="transmembrane region" description="Helical" evidence="2">
    <location>
        <begin position="52"/>
        <end position="72"/>
    </location>
</feature>
<feature type="transmembrane region" description="Helical" evidence="2">
    <location>
        <begin position="86"/>
        <end position="106"/>
    </location>
</feature>
<sequence>MNLITLIIMAMAMTTALYTINTYTTMKPDINKLSPYECGFDPLGNARTPISIQFFLVAILFILFDLEIVLLLPTPWSMNTNPSNTTILLITMLLTILTLGLLYEWLQGGLEWTE</sequence>
<dbReference type="EC" id="7.1.1.2"/>
<dbReference type="EMBL" id="AB008539">
    <property type="protein sequence ID" value="BAA33029.1"/>
    <property type="molecule type" value="Genomic_DNA"/>
</dbReference>
<dbReference type="PIR" id="T11095">
    <property type="entry name" value="T11095"/>
</dbReference>
<dbReference type="RefSeq" id="NP_008426.1">
    <property type="nucleotide sequence ID" value="NC_001945.1"/>
</dbReference>
<dbReference type="SMR" id="O79553"/>
<dbReference type="GeneID" id="808272"/>
<dbReference type="CTD" id="4537"/>
<dbReference type="GO" id="GO:0031966">
    <property type="term" value="C:mitochondrial membrane"/>
    <property type="evidence" value="ECO:0007669"/>
    <property type="project" value="UniProtKB-SubCell"/>
</dbReference>
<dbReference type="GO" id="GO:0030964">
    <property type="term" value="C:NADH dehydrogenase complex"/>
    <property type="evidence" value="ECO:0007669"/>
    <property type="project" value="TreeGrafter"/>
</dbReference>
<dbReference type="GO" id="GO:0008137">
    <property type="term" value="F:NADH dehydrogenase (ubiquinone) activity"/>
    <property type="evidence" value="ECO:0007669"/>
    <property type="project" value="UniProtKB-EC"/>
</dbReference>
<dbReference type="FunFam" id="1.20.58.1610:FF:000004">
    <property type="entry name" value="NADH-quinone oxidoreductase subunit A"/>
    <property type="match status" value="1"/>
</dbReference>
<dbReference type="Gene3D" id="1.20.58.1610">
    <property type="entry name" value="NADH:ubiquinone/plastoquinone oxidoreductase, chain 3"/>
    <property type="match status" value="1"/>
</dbReference>
<dbReference type="InterPro" id="IPR000440">
    <property type="entry name" value="NADH_UbQ/plastoQ_OxRdtase_su3"/>
</dbReference>
<dbReference type="InterPro" id="IPR038430">
    <property type="entry name" value="NDAH_ubi_oxred_su3_sf"/>
</dbReference>
<dbReference type="PANTHER" id="PTHR11058">
    <property type="entry name" value="NADH-UBIQUINONE OXIDOREDUCTASE CHAIN 3"/>
    <property type="match status" value="1"/>
</dbReference>
<dbReference type="PANTHER" id="PTHR11058:SF9">
    <property type="entry name" value="NADH-UBIQUINONE OXIDOREDUCTASE CHAIN 3"/>
    <property type="match status" value="1"/>
</dbReference>
<dbReference type="Pfam" id="PF00507">
    <property type="entry name" value="Oxidored_q4"/>
    <property type="match status" value="1"/>
</dbReference>
<keyword id="KW-0249">Electron transport</keyword>
<keyword id="KW-0472">Membrane</keyword>
<keyword id="KW-0496">Mitochondrion</keyword>
<keyword id="KW-0520">NAD</keyword>
<keyword id="KW-0679">Respiratory chain</keyword>
<keyword id="KW-1278">Translocase</keyword>
<keyword id="KW-0812">Transmembrane</keyword>
<keyword id="KW-1133">Transmembrane helix</keyword>
<keyword id="KW-0813">Transport</keyword>
<keyword id="KW-0830">Ubiquinone</keyword>
<protein>
    <recommendedName>
        <fullName>NADH-ubiquinone oxidoreductase chain 3</fullName>
        <ecNumber>7.1.1.2</ecNumber>
    </recommendedName>
    <alternativeName>
        <fullName>NADH dehydrogenase subunit 3</fullName>
    </alternativeName>
</protein>
<name>NU3M_LYCSM</name>
<gene>
    <name type="primary">MT-ND3</name>
    <name type="synonym">MTND3</name>
    <name type="synonym">NADH3</name>
    <name type="synonym">ND3</name>
</gene>
<reference key="1">
    <citation type="journal article" date="1998" name="Genetics">
        <title>The complete nucleotide sequence of a snake (Dinodon semicarinatus) mitochondrial genome with two identical control regions.</title>
        <authorList>
            <person name="Kumazawa Y."/>
            <person name="Ota H."/>
            <person name="Nishida M."/>
            <person name="Ozawa T."/>
        </authorList>
    </citation>
    <scope>NUCLEOTIDE SEQUENCE [GENOMIC DNA]</scope>
    <source>
        <tissue>Liver</tissue>
    </source>
</reference>
<geneLocation type="mitochondrion"/>
<evidence type="ECO:0000250" key="1"/>
<evidence type="ECO:0000255" key="2"/>
<evidence type="ECO:0000305" key="3"/>
<proteinExistence type="inferred from homology"/>
<organism>
    <name type="scientific">Lycodon semicarinatus</name>
    <name type="common">Ryukyu odd-tooth snake</name>
    <name type="synonym">Eumesodon semicarinatus</name>
    <dbReference type="NCBI Taxonomy" id="56549"/>
    <lineage>
        <taxon>Eukaryota</taxon>
        <taxon>Metazoa</taxon>
        <taxon>Chordata</taxon>
        <taxon>Craniata</taxon>
        <taxon>Vertebrata</taxon>
        <taxon>Euteleostomi</taxon>
        <taxon>Lepidosauria</taxon>
        <taxon>Squamata</taxon>
        <taxon>Bifurcata</taxon>
        <taxon>Unidentata</taxon>
        <taxon>Episquamata</taxon>
        <taxon>Toxicofera</taxon>
        <taxon>Serpentes</taxon>
        <taxon>Colubroidea</taxon>
        <taxon>Colubridae</taxon>
        <taxon>Colubrinae</taxon>
        <taxon>Lycodon</taxon>
    </lineage>
</organism>